<keyword id="KW-0175">Coiled coil</keyword>
<keyword id="KW-0238">DNA-binding</keyword>
<keyword id="KW-0804">Transcription</keyword>
<keyword id="KW-0805">Transcription regulation</keyword>
<dbReference type="EMBL" id="CP000538">
    <property type="protein sequence ID" value="EAQ73139.1"/>
    <property type="molecule type" value="Genomic_DNA"/>
</dbReference>
<dbReference type="RefSeq" id="WP_002854578.1">
    <property type="nucleotide sequence ID" value="NC_008787.1"/>
</dbReference>
<dbReference type="SMR" id="A1VY10"/>
<dbReference type="KEGG" id="cjj:CJJ81176_0313"/>
<dbReference type="eggNOG" id="COG0782">
    <property type="taxonomic scope" value="Bacteria"/>
</dbReference>
<dbReference type="HOGENOM" id="CLU_101379_2_0_7"/>
<dbReference type="Proteomes" id="UP000000646">
    <property type="component" value="Chromosome"/>
</dbReference>
<dbReference type="GO" id="GO:0003677">
    <property type="term" value="F:DNA binding"/>
    <property type="evidence" value="ECO:0007669"/>
    <property type="project" value="UniProtKB-UniRule"/>
</dbReference>
<dbReference type="GO" id="GO:0070063">
    <property type="term" value="F:RNA polymerase binding"/>
    <property type="evidence" value="ECO:0007669"/>
    <property type="project" value="InterPro"/>
</dbReference>
<dbReference type="GO" id="GO:0006354">
    <property type="term" value="P:DNA-templated transcription elongation"/>
    <property type="evidence" value="ECO:0007669"/>
    <property type="project" value="TreeGrafter"/>
</dbReference>
<dbReference type="GO" id="GO:0032784">
    <property type="term" value="P:regulation of DNA-templated transcription elongation"/>
    <property type="evidence" value="ECO:0007669"/>
    <property type="project" value="UniProtKB-UniRule"/>
</dbReference>
<dbReference type="FunFam" id="1.10.287.180:FF:000001">
    <property type="entry name" value="Transcription elongation factor GreA"/>
    <property type="match status" value="1"/>
</dbReference>
<dbReference type="FunFam" id="3.10.50.30:FF:000001">
    <property type="entry name" value="Transcription elongation factor GreA"/>
    <property type="match status" value="1"/>
</dbReference>
<dbReference type="Gene3D" id="3.10.50.30">
    <property type="entry name" value="Transcription elongation factor, GreA/GreB, C-terminal domain"/>
    <property type="match status" value="1"/>
</dbReference>
<dbReference type="Gene3D" id="1.10.287.180">
    <property type="entry name" value="Transcription elongation factor, GreA/GreB, N-terminal domain"/>
    <property type="match status" value="1"/>
</dbReference>
<dbReference type="HAMAP" id="MF_00105">
    <property type="entry name" value="GreA_GreB"/>
    <property type="match status" value="1"/>
</dbReference>
<dbReference type="InterPro" id="IPR036953">
    <property type="entry name" value="GreA/GreB_C_sf"/>
</dbReference>
<dbReference type="InterPro" id="IPR018151">
    <property type="entry name" value="TF_GreA/GreB_CS"/>
</dbReference>
<dbReference type="InterPro" id="IPR006359">
    <property type="entry name" value="Tscrpt_elong_fac_GreA"/>
</dbReference>
<dbReference type="InterPro" id="IPR028624">
    <property type="entry name" value="Tscrpt_elong_fac_GreA/B"/>
</dbReference>
<dbReference type="InterPro" id="IPR001437">
    <property type="entry name" value="Tscrpt_elong_fac_GreA/B_C"/>
</dbReference>
<dbReference type="InterPro" id="IPR023459">
    <property type="entry name" value="Tscrpt_elong_fac_GreA/B_fam"/>
</dbReference>
<dbReference type="InterPro" id="IPR022691">
    <property type="entry name" value="Tscrpt_elong_fac_GreA/B_N"/>
</dbReference>
<dbReference type="InterPro" id="IPR036805">
    <property type="entry name" value="Tscrpt_elong_fac_GreA/B_N_sf"/>
</dbReference>
<dbReference type="NCBIfam" id="TIGR01462">
    <property type="entry name" value="greA"/>
    <property type="match status" value="1"/>
</dbReference>
<dbReference type="NCBIfam" id="NF001261">
    <property type="entry name" value="PRK00226.1-2"/>
    <property type="match status" value="1"/>
</dbReference>
<dbReference type="NCBIfam" id="NF001263">
    <property type="entry name" value="PRK00226.1-4"/>
    <property type="match status" value="1"/>
</dbReference>
<dbReference type="NCBIfam" id="NF001264">
    <property type="entry name" value="PRK00226.1-5"/>
    <property type="match status" value="1"/>
</dbReference>
<dbReference type="PANTHER" id="PTHR30437">
    <property type="entry name" value="TRANSCRIPTION ELONGATION FACTOR GREA"/>
    <property type="match status" value="1"/>
</dbReference>
<dbReference type="PANTHER" id="PTHR30437:SF4">
    <property type="entry name" value="TRANSCRIPTION ELONGATION FACTOR GREA"/>
    <property type="match status" value="1"/>
</dbReference>
<dbReference type="Pfam" id="PF01272">
    <property type="entry name" value="GreA_GreB"/>
    <property type="match status" value="1"/>
</dbReference>
<dbReference type="Pfam" id="PF03449">
    <property type="entry name" value="GreA_GreB_N"/>
    <property type="match status" value="1"/>
</dbReference>
<dbReference type="PIRSF" id="PIRSF006092">
    <property type="entry name" value="GreA_GreB"/>
    <property type="match status" value="1"/>
</dbReference>
<dbReference type="SUPFAM" id="SSF54534">
    <property type="entry name" value="FKBP-like"/>
    <property type="match status" value="1"/>
</dbReference>
<dbReference type="SUPFAM" id="SSF46557">
    <property type="entry name" value="GreA transcript cleavage protein, N-terminal domain"/>
    <property type="match status" value="1"/>
</dbReference>
<dbReference type="PROSITE" id="PS00829">
    <property type="entry name" value="GREAB_1"/>
    <property type="match status" value="1"/>
</dbReference>
<dbReference type="PROSITE" id="PS00830">
    <property type="entry name" value="GREAB_2"/>
    <property type="match status" value="1"/>
</dbReference>
<sequence length="161" mass="17993">MQKEPMSQFGYDKLAAELKDLKDNQRPAVVIEIDTARSHGDLKENAEYHAAREKQALIESRIAELSDLLARAQVIDPSSYEHDSVKFGSSVVIIDLDTEKESKYTLVGICEGDLDKGYISIASPIAKAMLGKKEGDDFKVRLPKGESEFEILSINYEPLKF</sequence>
<gene>
    <name evidence="1" type="primary">greA</name>
    <name type="ordered locus">CJJ81176_0313</name>
</gene>
<protein>
    <recommendedName>
        <fullName evidence="1">Transcription elongation factor GreA</fullName>
    </recommendedName>
    <alternativeName>
        <fullName evidence="1">Transcript cleavage factor GreA</fullName>
    </alternativeName>
</protein>
<name>GREA_CAMJJ</name>
<proteinExistence type="inferred from homology"/>
<evidence type="ECO:0000255" key="1">
    <source>
        <dbReference type="HAMAP-Rule" id="MF_00105"/>
    </source>
</evidence>
<comment type="function">
    <text evidence="1">Necessary for efficient RNA polymerase transcription elongation past template-encoded arresting sites. The arresting sites in DNA have the property of trapping a certain fraction of elongating RNA polymerases that pass through, resulting in locked ternary complexes. Cleavage of the nascent transcript by cleavage factors such as GreA or GreB allows the resumption of elongation from the new 3'terminus. GreA releases sequences of 2 to 3 nucleotides.</text>
</comment>
<comment type="similarity">
    <text evidence="1">Belongs to the GreA/GreB family.</text>
</comment>
<reference key="1">
    <citation type="submission" date="2006-12" db="EMBL/GenBank/DDBJ databases">
        <authorList>
            <person name="Fouts D.E."/>
            <person name="Nelson K.E."/>
            <person name="Sebastian Y."/>
        </authorList>
    </citation>
    <scope>NUCLEOTIDE SEQUENCE [LARGE SCALE GENOMIC DNA]</scope>
    <source>
        <strain>81-176</strain>
    </source>
</reference>
<feature type="chain" id="PRO_1000034252" description="Transcription elongation factor GreA">
    <location>
        <begin position="1"/>
        <end position="161"/>
    </location>
</feature>
<feature type="coiled-coil region" evidence="1">
    <location>
        <begin position="45"/>
        <end position="73"/>
    </location>
</feature>
<organism>
    <name type="scientific">Campylobacter jejuni subsp. jejuni serotype O:23/36 (strain 81-176)</name>
    <dbReference type="NCBI Taxonomy" id="354242"/>
    <lineage>
        <taxon>Bacteria</taxon>
        <taxon>Pseudomonadati</taxon>
        <taxon>Campylobacterota</taxon>
        <taxon>Epsilonproteobacteria</taxon>
        <taxon>Campylobacterales</taxon>
        <taxon>Campylobacteraceae</taxon>
        <taxon>Campylobacter</taxon>
    </lineage>
</organism>
<accession>A1VY10</accession>